<sequence length="452" mass="47943">MPVDLDNSSTVSGEASVSISSTGNQNPLPNSTGKKKRNLPGMPDPESEVIALSPKTLLATNRFVCEICNKGFQRDQNLQLHRRGHNLPWKLRQKSNKEVKKKVYVCPEVSCVHHDPSRALGDLTGIKKHFCRKHGEKKWKCDKCSKKYAVQSDWKAHSKICGTKEYKCDCGTLFSRRDSFITHRAFCDALAEENARSHHSQSKKQNPEILTRKNPVPNPVPAPVDTESAKIKSSSTLTIKQSESPKTPPEIVQEAPKPTSLNVVTSNGVFAGLFESSSASPSIYTTSSSSKSLFASSSSIEPISLGLSTSHGSSFLGSNRFHAQPAMSATALLQKAAQMGAASSGGSLLHGLGIVSSTSTSIDAIVPHGLGLGLPCGGESSSGLKELMMGNSSVFGPKQTTLDFLGLGRAVGNGNGPSNGLSTLVGGGTGIDMATTFGSGEFSGKDISRRKS</sequence>
<reference key="1">
    <citation type="journal article" date="2000" name="Nature">
        <title>Sequence and analysis of chromosome 3 of the plant Arabidopsis thaliana.</title>
        <authorList>
            <person name="Salanoubat M."/>
            <person name="Lemcke K."/>
            <person name="Rieger M."/>
            <person name="Ansorge W."/>
            <person name="Unseld M."/>
            <person name="Fartmann B."/>
            <person name="Valle G."/>
            <person name="Bloecker H."/>
            <person name="Perez-Alonso M."/>
            <person name="Obermaier B."/>
            <person name="Delseny M."/>
            <person name="Boutry M."/>
            <person name="Grivell L.A."/>
            <person name="Mache R."/>
            <person name="Puigdomenech P."/>
            <person name="De Simone V."/>
            <person name="Choisne N."/>
            <person name="Artiguenave F."/>
            <person name="Robert C."/>
            <person name="Brottier P."/>
            <person name="Wincker P."/>
            <person name="Cattolico L."/>
            <person name="Weissenbach J."/>
            <person name="Saurin W."/>
            <person name="Quetier F."/>
            <person name="Schaefer M."/>
            <person name="Mueller-Auer S."/>
            <person name="Gabel C."/>
            <person name="Fuchs M."/>
            <person name="Benes V."/>
            <person name="Wurmbach E."/>
            <person name="Drzonek H."/>
            <person name="Erfle H."/>
            <person name="Jordan N."/>
            <person name="Bangert S."/>
            <person name="Wiedelmann R."/>
            <person name="Kranz H."/>
            <person name="Voss H."/>
            <person name="Holland R."/>
            <person name="Brandt P."/>
            <person name="Nyakatura G."/>
            <person name="Vezzi A."/>
            <person name="D'Angelo M."/>
            <person name="Pallavicini A."/>
            <person name="Toppo S."/>
            <person name="Simionati B."/>
            <person name="Conrad A."/>
            <person name="Hornischer K."/>
            <person name="Kauer G."/>
            <person name="Loehnert T.-H."/>
            <person name="Nordsiek G."/>
            <person name="Reichelt J."/>
            <person name="Scharfe M."/>
            <person name="Schoen O."/>
            <person name="Bargues M."/>
            <person name="Terol J."/>
            <person name="Climent J."/>
            <person name="Navarro P."/>
            <person name="Collado C."/>
            <person name="Perez-Perez A."/>
            <person name="Ottenwaelder B."/>
            <person name="Duchemin D."/>
            <person name="Cooke R."/>
            <person name="Laudie M."/>
            <person name="Berger-Llauro C."/>
            <person name="Purnelle B."/>
            <person name="Masuy D."/>
            <person name="de Haan M."/>
            <person name="Maarse A.C."/>
            <person name="Alcaraz J.-P."/>
            <person name="Cottet A."/>
            <person name="Casacuberta E."/>
            <person name="Monfort A."/>
            <person name="Argiriou A."/>
            <person name="Flores M."/>
            <person name="Liguori R."/>
            <person name="Vitale D."/>
            <person name="Mannhaupt G."/>
            <person name="Haase D."/>
            <person name="Schoof H."/>
            <person name="Rudd S."/>
            <person name="Zaccaria P."/>
            <person name="Mewes H.-W."/>
            <person name="Mayer K.F.X."/>
            <person name="Kaul S."/>
            <person name="Town C.D."/>
            <person name="Koo H.L."/>
            <person name="Tallon L.J."/>
            <person name="Jenkins J."/>
            <person name="Rooney T."/>
            <person name="Rizzo M."/>
            <person name="Walts A."/>
            <person name="Utterback T."/>
            <person name="Fujii C.Y."/>
            <person name="Shea T.P."/>
            <person name="Creasy T.H."/>
            <person name="Haas B."/>
            <person name="Maiti R."/>
            <person name="Wu D."/>
            <person name="Peterson J."/>
            <person name="Van Aken S."/>
            <person name="Pai G."/>
            <person name="Militscher J."/>
            <person name="Sellers P."/>
            <person name="Gill J.E."/>
            <person name="Feldblyum T.V."/>
            <person name="Preuss D."/>
            <person name="Lin X."/>
            <person name="Nierman W.C."/>
            <person name="Salzberg S.L."/>
            <person name="White O."/>
            <person name="Venter J.C."/>
            <person name="Fraser C.M."/>
            <person name="Kaneko T."/>
            <person name="Nakamura Y."/>
            <person name="Sato S."/>
            <person name="Kato T."/>
            <person name="Asamizu E."/>
            <person name="Sasamoto S."/>
            <person name="Kimura T."/>
            <person name="Idesawa K."/>
            <person name="Kawashima K."/>
            <person name="Kishida Y."/>
            <person name="Kiyokawa C."/>
            <person name="Kohara M."/>
            <person name="Matsumoto M."/>
            <person name="Matsuno A."/>
            <person name="Muraki A."/>
            <person name="Nakayama S."/>
            <person name="Nakazaki N."/>
            <person name="Shinpo S."/>
            <person name="Takeuchi C."/>
            <person name="Wada T."/>
            <person name="Watanabe A."/>
            <person name="Yamada M."/>
            <person name="Yasuda M."/>
            <person name="Tabata S."/>
        </authorList>
    </citation>
    <scope>NUCLEOTIDE SEQUENCE [LARGE SCALE GENOMIC DNA]</scope>
    <source>
        <strain>cv. Columbia</strain>
    </source>
</reference>
<reference key="2">
    <citation type="journal article" date="2017" name="Plant J.">
        <title>Araport11: a complete reannotation of the Arabidopsis thaliana reference genome.</title>
        <authorList>
            <person name="Cheng C.Y."/>
            <person name="Krishnakumar V."/>
            <person name="Chan A.P."/>
            <person name="Thibaud-Nissen F."/>
            <person name="Schobel S."/>
            <person name="Town C.D."/>
        </authorList>
    </citation>
    <scope>GENOME REANNOTATION</scope>
    <source>
        <strain>cv. Columbia</strain>
    </source>
</reference>
<reference key="3">
    <citation type="submission" date="2004-10" db="EMBL/GenBank/DDBJ databases">
        <title>Arabidopsis ORF clones.</title>
        <authorList>
            <person name="Kim C.J."/>
            <person name="Chen H."/>
            <person name="Cheuk R."/>
            <person name="Shinn P."/>
            <person name="Ecker J.R."/>
        </authorList>
    </citation>
    <scope>NUCLEOTIDE SEQUENCE [LARGE SCALE MRNA]</scope>
</reference>
<reference key="4">
    <citation type="submission" date="2006-07" db="EMBL/GenBank/DDBJ databases">
        <title>Large-scale analysis of RIKEN Arabidopsis full-length (RAFL) cDNAs.</title>
        <authorList>
            <person name="Totoki Y."/>
            <person name="Seki M."/>
            <person name="Ishida J."/>
            <person name="Nakajima M."/>
            <person name="Enju A."/>
            <person name="Kamiya A."/>
            <person name="Narusaka M."/>
            <person name="Shin-i T."/>
            <person name="Nakagawa M."/>
            <person name="Sakamoto N."/>
            <person name="Oishi K."/>
            <person name="Kohara Y."/>
            <person name="Kobayashi M."/>
            <person name="Toyoda A."/>
            <person name="Sakaki Y."/>
            <person name="Sakurai T."/>
            <person name="Iida K."/>
            <person name="Akiyama K."/>
            <person name="Satou M."/>
            <person name="Toyoda T."/>
            <person name="Konagaya A."/>
            <person name="Carninci P."/>
            <person name="Kawai J."/>
            <person name="Hayashizaki Y."/>
            <person name="Shinozaki K."/>
        </authorList>
    </citation>
    <scope>NUCLEOTIDE SEQUENCE [LARGE SCALE MRNA]</scope>
    <source>
        <strain>cv. Columbia</strain>
    </source>
</reference>
<reference key="5">
    <citation type="journal article" date="2006" name="BMC Genomics">
        <title>The maize INDETERMINATE1 flowering time regulator defines a highly conserved zinc finger protein family in higher plants.</title>
        <authorList>
            <person name="Colasanti J."/>
            <person name="Tremblay R."/>
            <person name="Wong A.Y."/>
            <person name="Coneva V."/>
            <person name="Kozaki A."/>
            <person name="Mable B.K."/>
        </authorList>
    </citation>
    <scope>GENE FAMILY</scope>
    <scope>NOMENCLATURE</scope>
</reference>
<reference key="6">
    <citation type="journal article" date="2014" name="Plant Cell">
        <title>DELLAs function as coactivators of GAI-ASSOCIATED FACTOR1 in regulation of gibberellin homeostasis and signaling in Arabidopsis.</title>
        <authorList>
            <person name="Fukazawa J."/>
            <person name="Teramura H."/>
            <person name="Murakoshi S."/>
            <person name="Nasuno K."/>
            <person name="Nishida N."/>
            <person name="Ito T."/>
            <person name="Yoshida M."/>
            <person name="Kamiya Y."/>
            <person name="Yamaguchi S."/>
            <person name="Takahashi Y."/>
        </authorList>
    </citation>
    <scope>FUNCTION</scope>
    <scope>DISRUPTION PHENOTYPE</scope>
    <scope>MUTAGENESIS OF 367-PRO--LEU-384</scope>
    <scope>INTERACTION WITH TPR1; TPR4 AND DELLA PROTEINS</scope>
    <scope>TISSUE SPECIFICITY</scope>
    <scope>SUBCELLULAR LOCATION</scope>
    <scope>ACTIVITY REGULATION</scope>
    <source>
        <strain>cv. Columbia</strain>
    </source>
</reference>
<keyword id="KW-0238">DNA-binding</keyword>
<keyword id="KW-0939">Gibberellin signaling pathway</keyword>
<keyword id="KW-0479">Metal-binding</keyword>
<keyword id="KW-0539">Nucleus</keyword>
<keyword id="KW-0597">Phosphoprotein</keyword>
<keyword id="KW-1185">Reference proteome</keyword>
<keyword id="KW-0677">Repeat</keyword>
<keyword id="KW-0804">Transcription</keyword>
<keyword id="KW-0805">Transcription regulation</keyword>
<keyword id="KW-0862">Zinc</keyword>
<keyword id="KW-0863">Zinc-finger</keyword>
<feature type="chain" id="PRO_0000431539" description="Zinc finger protein GAI-ASSOCIATED FACTOR 1">
    <location>
        <begin position="1"/>
        <end position="452"/>
    </location>
</feature>
<feature type="zinc finger region" description="C2H2-type 1" evidence="3">
    <location>
        <begin position="63"/>
        <end position="85"/>
    </location>
</feature>
<feature type="zinc finger region" description="C2H2-type 2" evidence="9">
    <location>
        <begin position="104"/>
        <end position="134"/>
    </location>
</feature>
<feature type="zinc finger region" description="C2H2-type 2; degenerate" evidence="3">
    <location>
        <begin position="139"/>
        <end position="162"/>
    </location>
</feature>
<feature type="zinc finger region" description="CCHC-type 2; atypical" evidence="9">
    <location>
        <begin position="166"/>
        <end position="189"/>
    </location>
</feature>
<feature type="region of interest" description="Disordered" evidence="5">
    <location>
        <begin position="1"/>
        <end position="47"/>
    </location>
</feature>
<feature type="region of interest" description="SHR-binding" evidence="1">
    <location>
        <begin position="176"/>
        <end position="188"/>
    </location>
</feature>
<feature type="region of interest" description="Disordered" evidence="5">
    <location>
        <begin position="196"/>
        <end position="254"/>
    </location>
</feature>
<feature type="short sequence motif" description="Nuclear localization signal" evidence="4">
    <location>
        <begin position="126"/>
        <end position="133"/>
    </location>
</feature>
<feature type="compositionally biased region" description="Polar residues" evidence="5">
    <location>
        <begin position="1"/>
        <end position="32"/>
    </location>
</feature>
<feature type="compositionally biased region" description="Polar residues" evidence="5">
    <location>
        <begin position="231"/>
        <end position="245"/>
    </location>
</feature>
<feature type="binding site" evidence="1">
    <location>
        <position position="141"/>
    </location>
    <ligand>
        <name>Zn(2+)</name>
        <dbReference type="ChEBI" id="CHEBI:29105"/>
        <label>1</label>
    </ligand>
</feature>
<feature type="binding site" evidence="1">
    <location>
        <position position="144"/>
    </location>
    <ligand>
        <name>Zn(2+)</name>
        <dbReference type="ChEBI" id="CHEBI:29105"/>
        <label>1</label>
    </ligand>
</feature>
<feature type="binding site" evidence="1">
    <location>
        <position position="157"/>
    </location>
    <ligand>
        <name>Zn(2+)</name>
        <dbReference type="ChEBI" id="CHEBI:29105"/>
        <label>1</label>
    </ligand>
</feature>
<feature type="binding site" evidence="1">
    <location>
        <position position="161"/>
    </location>
    <ligand>
        <name>Zn(2+)</name>
        <dbReference type="ChEBI" id="CHEBI:29105"/>
        <label>1</label>
    </ligand>
</feature>
<feature type="binding site" evidence="1">
    <location>
        <position position="168"/>
    </location>
    <ligand>
        <name>Zn(2+)</name>
        <dbReference type="ChEBI" id="CHEBI:29105"/>
        <label>2</label>
    </ligand>
</feature>
<feature type="binding site" evidence="1">
    <location>
        <position position="170"/>
    </location>
    <ligand>
        <name>Zn(2+)</name>
        <dbReference type="ChEBI" id="CHEBI:29105"/>
        <label>2</label>
    </ligand>
</feature>
<feature type="binding site" evidence="1">
    <location>
        <position position="183"/>
    </location>
    <ligand>
        <name>Zn(2+)</name>
        <dbReference type="ChEBI" id="CHEBI:29105"/>
        <label>2</label>
    </ligand>
</feature>
<feature type="binding site" evidence="1">
    <location>
        <position position="187"/>
    </location>
    <ligand>
        <name>Zn(2+)</name>
        <dbReference type="ChEBI" id="CHEBI:29105"/>
        <label>2</label>
    </ligand>
</feature>
<feature type="modified residue" description="Phosphoserine" evidence="2">
    <location>
        <position position="53"/>
    </location>
</feature>
<feature type="mutagenesis site" description="Impaired DELLA proteins binding." evidence="6">
    <location>
        <begin position="367"/>
        <end position="384"/>
    </location>
</feature>
<protein>
    <recommendedName>
        <fullName evidence="8">Zinc finger protein GAI-ASSOCIATED FACTOR 1</fullName>
    </recommendedName>
    <alternativeName>
        <fullName evidence="7">Protein indeterminate-domain 2</fullName>
    </alternativeName>
</protein>
<organism>
    <name type="scientific">Arabidopsis thaliana</name>
    <name type="common">Mouse-ear cress</name>
    <dbReference type="NCBI Taxonomy" id="3702"/>
    <lineage>
        <taxon>Eukaryota</taxon>
        <taxon>Viridiplantae</taxon>
        <taxon>Streptophyta</taxon>
        <taxon>Embryophyta</taxon>
        <taxon>Tracheophyta</taxon>
        <taxon>Spermatophyta</taxon>
        <taxon>Magnoliopsida</taxon>
        <taxon>eudicotyledons</taxon>
        <taxon>Gunneridae</taxon>
        <taxon>Pentapetalae</taxon>
        <taxon>rosids</taxon>
        <taxon>malvids</taxon>
        <taxon>Brassicales</taxon>
        <taxon>Brassicaceae</taxon>
        <taxon>Camelineae</taxon>
        <taxon>Arabidopsis</taxon>
    </lineage>
</organism>
<comment type="function">
    <text evidence="6">Transcription factor that acts as a positive regulator of gibberellin (GA) action, homeostasis and signaling. GA converts the GAF1 complex from transcriptional activator to repressor via the degradation of DELLA proteins.</text>
</comment>
<comment type="activity regulation">
    <text evidence="6">Transcription activation is repressed by gibberellic acid GA(3) in the presence of TPR4.</text>
</comment>
<comment type="subunit">
    <text evidence="6">Interacts with the DELLA proteins (e.g. GAI/RGA2, RGA, RGL1, RGL2 and RGLG3), acting as coactivators and with TPR1 and TPR4, acting as a corepressors, at the promoter of GA20OX2 gene.</text>
</comment>
<comment type="interaction">
    <interactant intactId="EBI-15200862">
        <id>Q9SCQ6</id>
    </interactant>
    <interactant intactId="EBI-15196807">
        <id>Q9SN22</id>
        <label>SCL32</label>
    </interactant>
    <organismsDiffer>false</organismsDiffer>
    <experiments>4</experiments>
</comment>
<comment type="interaction">
    <interactant intactId="EBI-15200862">
        <id>Q9SCQ6</id>
    </interactant>
    <interactant intactId="EBI-4424563">
        <id>Q93Z00</id>
        <label>TCP14</label>
    </interactant>
    <organismsDiffer>false</organismsDiffer>
    <experiments>3</experiments>
</comment>
<comment type="interaction">
    <interactant intactId="EBI-15200862">
        <id>Q9SCQ6</id>
    </interactant>
    <interactant intactId="EBI-15192325">
        <id>Q8LPR5</id>
        <label>TCP4</label>
    </interactant>
    <organismsDiffer>false</organismsDiffer>
    <experiments>3</experiments>
</comment>
<comment type="subcellular location">
    <subcellularLocation>
        <location evidence="4 6">Nucleus</location>
    </subcellularLocation>
</comment>
<comment type="tissue specificity">
    <text evidence="6">Observed in vegetative tissues. Mainly expressed in hypocotyls, petioles, shoot apices, root tips, and trichomes, and, at low levels, in leaves, stems and flowers.</text>
</comment>
<comment type="disruption phenotype">
    <text evidence="6">Plants lacking both ENY/IDD1 and GAF1/IDD2 have a decreased responsiveness to gibberellic acid (GA).</text>
</comment>
<evidence type="ECO:0000250" key="1">
    <source>
        <dbReference type="UniProtKB" id="Q700D2"/>
    </source>
</evidence>
<evidence type="ECO:0000250" key="2">
    <source>
        <dbReference type="UniProtKB" id="Q8GYC1"/>
    </source>
</evidence>
<evidence type="ECO:0000255" key="3">
    <source>
        <dbReference type="PROSITE-ProRule" id="PRU00042"/>
    </source>
</evidence>
<evidence type="ECO:0000255" key="4">
    <source>
        <dbReference type="PROSITE-ProRule" id="PRU00768"/>
    </source>
</evidence>
<evidence type="ECO:0000256" key="5">
    <source>
        <dbReference type="SAM" id="MobiDB-lite"/>
    </source>
</evidence>
<evidence type="ECO:0000269" key="6">
    <source>
    </source>
</evidence>
<evidence type="ECO:0000303" key="7">
    <source>
    </source>
</evidence>
<evidence type="ECO:0000303" key="8">
    <source>
    </source>
</evidence>
<evidence type="ECO:0000305" key="9"/>
<evidence type="ECO:0000312" key="10">
    <source>
        <dbReference type="Araport" id="AT3G50700"/>
    </source>
</evidence>
<evidence type="ECO:0000312" key="11">
    <source>
        <dbReference type="EMBL" id="CAB62439.1"/>
    </source>
</evidence>
<gene>
    <name evidence="8" type="primary">GAF1</name>
    <name evidence="7" type="synonym">IDD2</name>
    <name evidence="10" type="ordered locus">At3g50700</name>
    <name evidence="11" type="ORF">T3A5.80</name>
</gene>
<proteinExistence type="evidence at protein level"/>
<dbReference type="EMBL" id="AL132979">
    <property type="protein sequence ID" value="CAB62439.1"/>
    <property type="molecule type" value="Genomic_DNA"/>
</dbReference>
<dbReference type="EMBL" id="CP002686">
    <property type="protein sequence ID" value="AEE78699.1"/>
    <property type="molecule type" value="Genomic_DNA"/>
</dbReference>
<dbReference type="EMBL" id="BT014947">
    <property type="protein sequence ID" value="AAT47798.1"/>
    <property type="molecule type" value="mRNA"/>
</dbReference>
<dbReference type="EMBL" id="BT015836">
    <property type="protein sequence ID" value="AAU94399.1"/>
    <property type="molecule type" value="mRNA"/>
</dbReference>
<dbReference type="EMBL" id="AK226933">
    <property type="protein sequence ID" value="BAE99004.1"/>
    <property type="molecule type" value="mRNA"/>
</dbReference>
<dbReference type="PIR" id="T46147">
    <property type="entry name" value="T46147"/>
</dbReference>
<dbReference type="RefSeq" id="NP_190639.1">
    <property type="nucleotide sequence ID" value="NM_114930.6"/>
</dbReference>
<dbReference type="SMR" id="Q9SCQ6"/>
<dbReference type="FunCoup" id="Q9SCQ6">
    <property type="interactions" value="526"/>
</dbReference>
<dbReference type="IntAct" id="Q9SCQ6">
    <property type="interactions" value="14"/>
</dbReference>
<dbReference type="STRING" id="3702.Q9SCQ6"/>
<dbReference type="iPTMnet" id="Q9SCQ6"/>
<dbReference type="PaxDb" id="3702-AT3G50700.1"/>
<dbReference type="ProteomicsDB" id="228783"/>
<dbReference type="EnsemblPlants" id="AT3G50700.1">
    <property type="protein sequence ID" value="AT3G50700.1"/>
    <property type="gene ID" value="AT3G50700"/>
</dbReference>
<dbReference type="GeneID" id="824234"/>
<dbReference type="Gramene" id="AT3G50700.1">
    <property type="protein sequence ID" value="AT3G50700.1"/>
    <property type="gene ID" value="AT3G50700"/>
</dbReference>
<dbReference type="KEGG" id="ath:AT3G50700"/>
<dbReference type="Araport" id="AT3G50700"/>
<dbReference type="TAIR" id="AT3G50700">
    <property type="gene designation" value="IDD2"/>
</dbReference>
<dbReference type="eggNOG" id="KOG1721">
    <property type="taxonomic scope" value="Eukaryota"/>
</dbReference>
<dbReference type="HOGENOM" id="CLU_014578_2_2_1"/>
<dbReference type="InParanoid" id="Q9SCQ6"/>
<dbReference type="OMA" id="NGLQWGQ"/>
<dbReference type="PhylomeDB" id="Q9SCQ6"/>
<dbReference type="PRO" id="PR:Q9SCQ6"/>
<dbReference type="Proteomes" id="UP000006548">
    <property type="component" value="Chromosome 3"/>
</dbReference>
<dbReference type="ExpressionAtlas" id="Q9SCQ6">
    <property type="expression patterns" value="baseline and differential"/>
</dbReference>
<dbReference type="GO" id="GO:0005634">
    <property type="term" value="C:nucleus"/>
    <property type="evidence" value="ECO:0000314"/>
    <property type="project" value="UniProtKB"/>
</dbReference>
<dbReference type="GO" id="GO:0003677">
    <property type="term" value="F:DNA binding"/>
    <property type="evidence" value="ECO:0007669"/>
    <property type="project" value="UniProtKB-KW"/>
</dbReference>
<dbReference type="GO" id="GO:0003700">
    <property type="term" value="F:DNA-binding transcription factor activity"/>
    <property type="evidence" value="ECO:0000250"/>
    <property type="project" value="TAIR"/>
</dbReference>
<dbReference type="GO" id="GO:0008270">
    <property type="term" value="F:zinc ion binding"/>
    <property type="evidence" value="ECO:0007669"/>
    <property type="project" value="UniProtKB-KW"/>
</dbReference>
<dbReference type="GO" id="GO:0010336">
    <property type="term" value="P:gibberellic acid homeostasis"/>
    <property type="evidence" value="ECO:0000314"/>
    <property type="project" value="UniProtKB"/>
</dbReference>
<dbReference type="GO" id="GO:0009740">
    <property type="term" value="P:gibberellic acid mediated signaling pathway"/>
    <property type="evidence" value="ECO:0007669"/>
    <property type="project" value="UniProtKB-KW"/>
</dbReference>
<dbReference type="GO" id="GO:0006355">
    <property type="term" value="P:regulation of DNA-templated transcription"/>
    <property type="evidence" value="ECO:0000304"/>
    <property type="project" value="TAIR"/>
</dbReference>
<dbReference type="GO" id="GO:0009937">
    <property type="term" value="P:regulation of gibberellic acid mediated signaling pathway"/>
    <property type="evidence" value="ECO:0000315"/>
    <property type="project" value="UniProtKB"/>
</dbReference>
<dbReference type="FunFam" id="3.30.160.60:FF:000554">
    <property type="entry name" value="protein indeterminate-domain 12-like"/>
    <property type="match status" value="1"/>
</dbReference>
<dbReference type="FunFam" id="3.30.160.60:FF:000131">
    <property type="entry name" value="protein indeterminate-domain 5, chloroplastic-like"/>
    <property type="match status" value="1"/>
</dbReference>
<dbReference type="Gene3D" id="3.30.160.60">
    <property type="entry name" value="Classic Zinc Finger"/>
    <property type="match status" value="2"/>
</dbReference>
<dbReference type="InterPro" id="IPR055187">
    <property type="entry name" value="C2CH-3rd_BIRD-IDD"/>
</dbReference>
<dbReference type="InterPro" id="IPR055185">
    <property type="entry name" value="C2CH-4th_BIRD-IDD"/>
</dbReference>
<dbReference type="InterPro" id="IPR055186">
    <property type="entry name" value="C2H2-2nd_BIRD-IDD"/>
</dbReference>
<dbReference type="InterPro" id="IPR031140">
    <property type="entry name" value="IDD1-16"/>
</dbReference>
<dbReference type="InterPro" id="IPR036236">
    <property type="entry name" value="Znf_C2H2_sf"/>
</dbReference>
<dbReference type="InterPro" id="IPR013087">
    <property type="entry name" value="Znf_C2H2_type"/>
</dbReference>
<dbReference type="PANTHER" id="PTHR10593">
    <property type="entry name" value="SERINE/THREONINE-PROTEIN KINASE RIO"/>
    <property type="match status" value="1"/>
</dbReference>
<dbReference type="PANTHER" id="PTHR10593:SF188">
    <property type="entry name" value="ZINC FINGER PROTEIN GAI-ASSOCIATED FACTOR 1"/>
    <property type="match status" value="1"/>
</dbReference>
<dbReference type="Pfam" id="PF22995">
    <property type="entry name" value="C2CH-3rd_BIRD-IDD"/>
    <property type="match status" value="1"/>
</dbReference>
<dbReference type="Pfam" id="PF22992">
    <property type="entry name" value="C2CH-4th_BIRD-IDD"/>
    <property type="match status" value="1"/>
</dbReference>
<dbReference type="Pfam" id="PF22996">
    <property type="entry name" value="C2H2-2nd_BIRD-IDD"/>
    <property type="match status" value="1"/>
</dbReference>
<dbReference type="Pfam" id="PF00096">
    <property type="entry name" value="zf-C2H2"/>
    <property type="match status" value="1"/>
</dbReference>
<dbReference type="SMART" id="SM00355">
    <property type="entry name" value="ZnF_C2H2"/>
    <property type="match status" value="3"/>
</dbReference>
<dbReference type="SUPFAM" id="SSF57667">
    <property type="entry name" value="beta-beta-alpha zinc fingers"/>
    <property type="match status" value="1"/>
</dbReference>
<dbReference type="PROSITE" id="PS00028">
    <property type="entry name" value="ZINC_FINGER_C2H2_1"/>
    <property type="match status" value="1"/>
</dbReference>
<dbReference type="PROSITE" id="PS50157">
    <property type="entry name" value="ZINC_FINGER_C2H2_2"/>
    <property type="match status" value="1"/>
</dbReference>
<name>IDD2_ARATH</name>
<accession>Q9SCQ6</accession>